<reference key="1">
    <citation type="journal article" date="2004" name="J. Mol. Microbiol. Biotechnol.">
        <title>The complete genome sequence of Bacillus licheniformis DSM13, an organism with great industrial potential.</title>
        <authorList>
            <person name="Veith B."/>
            <person name="Herzberg C."/>
            <person name="Steckel S."/>
            <person name="Feesche J."/>
            <person name="Maurer K.H."/>
            <person name="Ehrenreich P."/>
            <person name="Baeumer S."/>
            <person name="Henne A."/>
            <person name="Liesegang H."/>
            <person name="Merkl R."/>
            <person name="Ehrenreich A."/>
            <person name="Gottschalk G."/>
        </authorList>
    </citation>
    <scope>NUCLEOTIDE SEQUENCE [LARGE SCALE GENOMIC DNA]</scope>
    <source>
        <strain>ATCC 14580 / DSM 13 / JCM 2505 / CCUG 7422 / NBRC 12200 / NCIMB 9375 / NCTC 10341 / NRRL NRS-1264 / Gibson 46</strain>
    </source>
</reference>
<reference key="2">
    <citation type="journal article" date="2004" name="Genome Biol.">
        <title>Complete genome sequence of the industrial bacterium Bacillus licheniformis and comparisons with closely related Bacillus species.</title>
        <authorList>
            <person name="Rey M.W."/>
            <person name="Ramaiya P."/>
            <person name="Nelson B.A."/>
            <person name="Brody-Karpin S.D."/>
            <person name="Zaretsky E.J."/>
            <person name="Tang M."/>
            <person name="Lopez de Leon A."/>
            <person name="Xiang H."/>
            <person name="Gusti V."/>
            <person name="Clausen I.G."/>
            <person name="Olsen P.B."/>
            <person name="Rasmussen M.D."/>
            <person name="Andersen J.T."/>
            <person name="Joergensen P.L."/>
            <person name="Larsen T.S."/>
            <person name="Sorokin A."/>
            <person name="Bolotin A."/>
            <person name="Lapidus A."/>
            <person name="Galleron N."/>
            <person name="Ehrlich S.D."/>
            <person name="Berka R.M."/>
        </authorList>
    </citation>
    <scope>NUCLEOTIDE SEQUENCE [LARGE SCALE GENOMIC DNA]</scope>
    <source>
        <strain>ATCC 14580 / DSM 13 / JCM 2505 / CCUG 7422 / NBRC 12200 / NCIMB 9375 / NCTC 10341 / NRRL NRS-1264 / Gibson 46</strain>
    </source>
</reference>
<sequence length="197" mass="22137">MTLDIVNWKAIVEALLYAAGDEGLTKKQLLSVLEVDEAELLDIMLDVKETYEKEDRGIELVEYADTYMLSTKKEFAVYLKKLIEAPSKGLSQAALEVLAIVSYKQPITRAEVEEIRGVKSERILQSLVAKALLCEVGRADGPGRAILYGTTETFLEQFGLKTLEELPPLPENVEEDGVQEEADLFFENFNQTFEDLK</sequence>
<evidence type="ECO:0000255" key="1">
    <source>
        <dbReference type="HAMAP-Rule" id="MF_01804"/>
    </source>
</evidence>
<comment type="function">
    <text evidence="1">Participates in chromosomal partition during cell division. May act via the formation of a condensin-like complex containing Smc and ScpA that pull DNA away from mid-cell into both cell halves.</text>
</comment>
<comment type="subunit">
    <text evidence="1">Homodimer. Homodimerization may be required to stabilize the binding of ScpA to the Smc head domains. Component of a cohesin-like complex composed of ScpA, ScpB and the Smc homodimer, in which ScpA and ScpB bind to the head domain of Smc. The presence of the three proteins is required for the association of the complex with DNA.</text>
</comment>
<comment type="subcellular location">
    <subcellularLocation>
        <location evidence="1">Cytoplasm</location>
    </subcellularLocation>
    <text evidence="1">Associated with two foci at the outer edges of the nucleoid region in young cells, and at four foci within both cell halves in older cells.</text>
</comment>
<comment type="similarity">
    <text evidence="1">Belongs to the ScpB family.</text>
</comment>
<name>SCPB_BACLD</name>
<protein>
    <recommendedName>
        <fullName evidence="1">Segregation and condensation protein B</fullName>
    </recommendedName>
</protein>
<gene>
    <name evidence="1" type="primary">scpB</name>
    <name type="ordered locus">BLi02467</name>
    <name type="ordered locus">BL01885</name>
</gene>
<dbReference type="EMBL" id="AE017333">
    <property type="protein sequence ID" value="AAU41342.1"/>
    <property type="molecule type" value="Genomic_DNA"/>
</dbReference>
<dbReference type="EMBL" id="CP000002">
    <property type="protein sequence ID" value="AAU23988.1"/>
    <property type="molecule type" value="Genomic_DNA"/>
</dbReference>
<dbReference type="RefSeq" id="WP_003183104.1">
    <property type="nucleotide sequence ID" value="NC_006322.1"/>
</dbReference>
<dbReference type="SMR" id="Q65HX2"/>
<dbReference type="STRING" id="279010.BL01885"/>
<dbReference type="GeneID" id="92860938"/>
<dbReference type="KEGG" id="bld:BLi02467"/>
<dbReference type="KEGG" id="bli:BL01885"/>
<dbReference type="PATRIC" id="fig|279010.13.peg.2497"/>
<dbReference type="eggNOG" id="COG1386">
    <property type="taxonomic scope" value="Bacteria"/>
</dbReference>
<dbReference type="HOGENOM" id="CLU_045647_5_3_9"/>
<dbReference type="Proteomes" id="UP000000606">
    <property type="component" value="Chromosome"/>
</dbReference>
<dbReference type="GO" id="GO:0005737">
    <property type="term" value="C:cytoplasm"/>
    <property type="evidence" value="ECO:0007669"/>
    <property type="project" value="UniProtKB-SubCell"/>
</dbReference>
<dbReference type="GO" id="GO:0051301">
    <property type="term" value="P:cell division"/>
    <property type="evidence" value="ECO:0007669"/>
    <property type="project" value="UniProtKB-KW"/>
</dbReference>
<dbReference type="GO" id="GO:0051304">
    <property type="term" value="P:chromosome separation"/>
    <property type="evidence" value="ECO:0007669"/>
    <property type="project" value="InterPro"/>
</dbReference>
<dbReference type="GO" id="GO:0006260">
    <property type="term" value="P:DNA replication"/>
    <property type="evidence" value="ECO:0007669"/>
    <property type="project" value="UniProtKB-UniRule"/>
</dbReference>
<dbReference type="Gene3D" id="1.10.10.10">
    <property type="entry name" value="Winged helix-like DNA-binding domain superfamily/Winged helix DNA-binding domain"/>
    <property type="match status" value="2"/>
</dbReference>
<dbReference type="HAMAP" id="MF_01804">
    <property type="entry name" value="ScpB"/>
    <property type="match status" value="1"/>
</dbReference>
<dbReference type="InterPro" id="IPR005234">
    <property type="entry name" value="ScpB_csome_segregation"/>
</dbReference>
<dbReference type="InterPro" id="IPR036388">
    <property type="entry name" value="WH-like_DNA-bd_sf"/>
</dbReference>
<dbReference type="InterPro" id="IPR036390">
    <property type="entry name" value="WH_DNA-bd_sf"/>
</dbReference>
<dbReference type="NCBIfam" id="TIGR00281">
    <property type="entry name" value="SMC-Scp complex subunit ScpB"/>
    <property type="match status" value="1"/>
</dbReference>
<dbReference type="PANTHER" id="PTHR34298">
    <property type="entry name" value="SEGREGATION AND CONDENSATION PROTEIN B"/>
    <property type="match status" value="1"/>
</dbReference>
<dbReference type="PANTHER" id="PTHR34298:SF2">
    <property type="entry name" value="SEGREGATION AND CONDENSATION PROTEIN B"/>
    <property type="match status" value="1"/>
</dbReference>
<dbReference type="Pfam" id="PF04079">
    <property type="entry name" value="SMC_ScpB"/>
    <property type="match status" value="1"/>
</dbReference>
<dbReference type="PIRSF" id="PIRSF019345">
    <property type="entry name" value="ScpB"/>
    <property type="match status" value="1"/>
</dbReference>
<dbReference type="SUPFAM" id="SSF46785">
    <property type="entry name" value="Winged helix' DNA-binding domain"/>
    <property type="match status" value="2"/>
</dbReference>
<organism>
    <name type="scientific">Bacillus licheniformis (strain ATCC 14580 / DSM 13 / JCM 2505 / CCUG 7422 / NBRC 12200 / NCIMB 9375 / NCTC 10341 / NRRL NRS-1264 / Gibson 46)</name>
    <dbReference type="NCBI Taxonomy" id="279010"/>
    <lineage>
        <taxon>Bacteria</taxon>
        <taxon>Bacillati</taxon>
        <taxon>Bacillota</taxon>
        <taxon>Bacilli</taxon>
        <taxon>Bacillales</taxon>
        <taxon>Bacillaceae</taxon>
        <taxon>Bacillus</taxon>
    </lineage>
</organism>
<accession>Q65HX2</accession>
<accession>Q62TC1</accession>
<keyword id="KW-0131">Cell cycle</keyword>
<keyword id="KW-0132">Cell division</keyword>
<keyword id="KW-0159">Chromosome partition</keyword>
<keyword id="KW-0963">Cytoplasm</keyword>
<keyword id="KW-1185">Reference proteome</keyword>
<feature type="chain" id="PRO_0000273295" description="Segregation and condensation protein B">
    <location>
        <begin position="1"/>
        <end position="197"/>
    </location>
</feature>
<proteinExistence type="inferred from homology"/>